<proteinExistence type="inferred from homology"/>
<reference key="1">
    <citation type="journal article" date="2005" name="Proc. Natl. Acad. Sci. U.S.A.">
        <title>The psychrophilic lifestyle as revealed by the genome sequence of Colwellia psychrerythraea 34H through genomic and proteomic analyses.</title>
        <authorList>
            <person name="Methe B.A."/>
            <person name="Nelson K.E."/>
            <person name="Deming J.W."/>
            <person name="Momen B."/>
            <person name="Melamud E."/>
            <person name="Zhang X."/>
            <person name="Moult J."/>
            <person name="Madupu R."/>
            <person name="Nelson W.C."/>
            <person name="Dodson R.J."/>
            <person name="Brinkac L.M."/>
            <person name="Daugherty S.C."/>
            <person name="Durkin A.S."/>
            <person name="DeBoy R.T."/>
            <person name="Kolonay J.F."/>
            <person name="Sullivan S.A."/>
            <person name="Zhou L."/>
            <person name="Davidsen T.M."/>
            <person name="Wu M."/>
            <person name="Huston A.L."/>
            <person name="Lewis M."/>
            <person name="Weaver B."/>
            <person name="Weidman J.F."/>
            <person name="Khouri H."/>
            <person name="Utterback T.R."/>
            <person name="Feldblyum T.V."/>
            <person name="Fraser C.M."/>
        </authorList>
    </citation>
    <scope>NUCLEOTIDE SEQUENCE [LARGE SCALE GENOMIC DNA]</scope>
    <source>
        <strain>34H / ATCC BAA-681</strain>
    </source>
</reference>
<protein>
    <recommendedName>
        <fullName evidence="1">Large ribosomal subunit protein uL23</fullName>
    </recommendedName>
    <alternativeName>
        <fullName evidence="2">50S ribosomal protein L23</fullName>
    </alternativeName>
</protein>
<accession>Q487Z5</accession>
<keyword id="KW-0687">Ribonucleoprotein</keyword>
<keyword id="KW-0689">Ribosomal protein</keyword>
<keyword id="KW-0694">RNA-binding</keyword>
<keyword id="KW-0699">rRNA-binding</keyword>
<gene>
    <name evidence="1" type="primary">rplW</name>
    <name type="ordered locus">CPS_0871</name>
</gene>
<name>RL23_COLP3</name>
<evidence type="ECO:0000255" key="1">
    <source>
        <dbReference type="HAMAP-Rule" id="MF_01369"/>
    </source>
</evidence>
<evidence type="ECO:0000305" key="2"/>
<dbReference type="EMBL" id="CP000083">
    <property type="protein sequence ID" value="AAZ26119.1"/>
    <property type="molecule type" value="Genomic_DNA"/>
</dbReference>
<dbReference type="RefSeq" id="WP_011041720.1">
    <property type="nucleotide sequence ID" value="NC_003910.7"/>
</dbReference>
<dbReference type="SMR" id="Q487Z5"/>
<dbReference type="STRING" id="167879.CPS_0871"/>
<dbReference type="KEGG" id="cps:CPS_0871"/>
<dbReference type="eggNOG" id="COG0089">
    <property type="taxonomic scope" value="Bacteria"/>
</dbReference>
<dbReference type="HOGENOM" id="CLU_037562_3_1_6"/>
<dbReference type="Proteomes" id="UP000000547">
    <property type="component" value="Chromosome"/>
</dbReference>
<dbReference type="GO" id="GO:1990904">
    <property type="term" value="C:ribonucleoprotein complex"/>
    <property type="evidence" value="ECO:0007669"/>
    <property type="project" value="UniProtKB-KW"/>
</dbReference>
<dbReference type="GO" id="GO:0005840">
    <property type="term" value="C:ribosome"/>
    <property type="evidence" value="ECO:0007669"/>
    <property type="project" value="UniProtKB-KW"/>
</dbReference>
<dbReference type="GO" id="GO:0019843">
    <property type="term" value="F:rRNA binding"/>
    <property type="evidence" value="ECO:0007669"/>
    <property type="project" value="UniProtKB-UniRule"/>
</dbReference>
<dbReference type="GO" id="GO:0003735">
    <property type="term" value="F:structural constituent of ribosome"/>
    <property type="evidence" value="ECO:0007669"/>
    <property type="project" value="InterPro"/>
</dbReference>
<dbReference type="GO" id="GO:0006412">
    <property type="term" value="P:translation"/>
    <property type="evidence" value="ECO:0007669"/>
    <property type="project" value="UniProtKB-UniRule"/>
</dbReference>
<dbReference type="FunFam" id="3.30.70.330:FF:000001">
    <property type="entry name" value="50S ribosomal protein L23"/>
    <property type="match status" value="1"/>
</dbReference>
<dbReference type="Gene3D" id="3.30.70.330">
    <property type="match status" value="1"/>
</dbReference>
<dbReference type="HAMAP" id="MF_01369_B">
    <property type="entry name" value="Ribosomal_uL23_B"/>
    <property type="match status" value="1"/>
</dbReference>
<dbReference type="InterPro" id="IPR012677">
    <property type="entry name" value="Nucleotide-bd_a/b_plait_sf"/>
</dbReference>
<dbReference type="InterPro" id="IPR013025">
    <property type="entry name" value="Ribosomal_uL23-like"/>
</dbReference>
<dbReference type="InterPro" id="IPR012678">
    <property type="entry name" value="Ribosomal_uL23/eL15/eS24_sf"/>
</dbReference>
<dbReference type="InterPro" id="IPR001014">
    <property type="entry name" value="Ribosomal_uL23_CS"/>
</dbReference>
<dbReference type="NCBIfam" id="NF004358">
    <property type="entry name" value="PRK05738.1-1"/>
    <property type="match status" value="1"/>
</dbReference>
<dbReference type="NCBIfam" id="NF004359">
    <property type="entry name" value="PRK05738.1-3"/>
    <property type="match status" value="1"/>
</dbReference>
<dbReference type="NCBIfam" id="NF004363">
    <property type="entry name" value="PRK05738.2-4"/>
    <property type="match status" value="1"/>
</dbReference>
<dbReference type="NCBIfam" id="NF004366">
    <property type="entry name" value="PRK05738.3-2"/>
    <property type="match status" value="1"/>
</dbReference>
<dbReference type="PANTHER" id="PTHR11620">
    <property type="entry name" value="60S RIBOSOMAL PROTEIN L23A"/>
    <property type="match status" value="1"/>
</dbReference>
<dbReference type="Pfam" id="PF00276">
    <property type="entry name" value="Ribosomal_L23"/>
    <property type="match status" value="1"/>
</dbReference>
<dbReference type="SUPFAM" id="SSF54189">
    <property type="entry name" value="Ribosomal proteins S24e, L23 and L15e"/>
    <property type="match status" value="1"/>
</dbReference>
<dbReference type="PROSITE" id="PS00050">
    <property type="entry name" value="RIBOSOMAL_L23"/>
    <property type="match status" value="1"/>
</dbReference>
<sequence length="100" mass="10868">MINEERLLKVLLAPNISEKATTAAEANNTVVFKVATDATKAEIKAAVEKLFEVTVEGVNTLNVKGKVKRTGARFGRRNDWKKAYVTLAEGSDIDFVGAES</sequence>
<comment type="function">
    <text evidence="1">One of the early assembly proteins it binds 23S rRNA. One of the proteins that surrounds the polypeptide exit tunnel on the outside of the ribosome. Forms the main docking site for trigger factor binding to the ribosome.</text>
</comment>
<comment type="subunit">
    <text evidence="1">Part of the 50S ribosomal subunit. Contacts protein L29, and trigger factor when it is bound to the ribosome.</text>
</comment>
<comment type="similarity">
    <text evidence="1">Belongs to the universal ribosomal protein uL23 family.</text>
</comment>
<feature type="chain" id="PRO_0000272735" description="Large ribosomal subunit protein uL23">
    <location>
        <begin position="1"/>
        <end position="100"/>
    </location>
</feature>
<organism>
    <name type="scientific">Colwellia psychrerythraea (strain 34H / ATCC BAA-681)</name>
    <name type="common">Vibrio psychroerythus</name>
    <dbReference type="NCBI Taxonomy" id="167879"/>
    <lineage>
        <taxon>Bacteria</taxon>
        <taxon>Pseudomonadati</taxon>
        <taxon>Pseudomonadota</taxon>
        <taxon>Gammaproteobacteria</taxon>
        <taxon>Alteromonadales</taxon>
        <taxon>Colwelliaceae</taxon>
        <taxon>Colwellia</taxon>
    </lineage>
</organism>